<accession>Q2N9U6</accession>
<organism>
    <name type="scientific">Erythrobacter litoralis (strain HTCC2594)</name>
    <dbReference type="NCBI Taxonomy" id="314225"/>
    <lineage>
        <taxon>Bacteria</taxon>
        <taxon>Pseudomonadati</taxon>
        <taxon>Pseudomonadota</taxon>
        <taxon>Alphaproteobacteria</taxon>
        <taxon>Sphingomonadales</taxon>
        <taxon>Erythrobacteraceae</taxon>
        <taxon>Erythrobacter/Porphyrobacter group</taxon>
        <taxon>Erythrobacter</taxon>
    </lineage>
</organism>
<comment type="function">
    <text evidence="1">Required for accurate and efficient protein synthesis under certain stress conditions. May act as a fidelity factor of the translation reaction, by catalyzing a one-codon backward translocation of tRNAs on improperly translocated ribosomes. Back-translocation proceeds from a post-translocation (POST) complex to a pre-translocation (PRE) complex, thus giving elongation factor G a second chance to translocate the tRNAs correctly. Binds to ribosomes in a GTP-dependent manner.</text>
</comment>
<comment type="catalytic activity">
    <reaction evidence="1">
        <text>GTP + H2O = GDP + phosphate + H(+)</text>
        <dbReference type="Rhea" id="RHEA:19669"/>
        <dbReference type="ChEBI" id="CHEBI:15377"/>
        <dbReference type="ChEBI" id="CHEBI:15378"/>
        <dbReference type="ChEBI" id="CHEBI:37565"/>
        <dbReference type="ChEBI" id="CHEBI:43474"/>
        <dbReference type="ChEBI" id="CHEBI:58189"/>
        <dbReference type="EC" id="3.6.5.n1"/>
    </reaction>
</comment>
<comment type="subcellular location">
    <subcellularLocation>
        <location evidence="1">Cell inner membrane</location>
        <topology evidence="1">Peripheral membrane protein</topology>
        <orientation evidence="1">Cytoplasmic side</orientation>
    </subcellularLocation>
</comment>
<comment type="similarity">
    <text evidence="1">Belongs to the TRAFAC class translation factor GTPase superfamily. Classic translation factor GTPase family. LepA subfamily.</text>
</comment>
<protein>
    <recommendedName>
        <fullName evidence="1">Elongation factor 4</fullName>
        <shortName evidence="1">EF-4</shortName>
        <ecNumber evidence="1">3.6.5.n1</ecNumber>
    </recommendedName>
    <alternativeName>
        <fullName evidence="1">Ribosomal back-translocase LepA</fullName>
    </alternativeName>
</protein>
<evidence type="ECO:0000255" key="1">
    <source>
        <dbReference type="HAMAP-Rule" id="MF_00071"/>
    </source>
</evidence>
<sequence length="609" mass="67316">MTDLSKIRNFSIIAHIDHGKSTLADRLIQVCGGLTAREMSEQVLDNMDIEKERGITIKAQTVRLNYTASDGETYELNLMDTPGHVDFAYEVSRSLAACEGALLVVDAAQGVEAQTLANVYQSIEHDHEIVPVINKIDLPAAEPEQVRAEIEDIIGLDASEAVMTSAKSGIGIEDVLEAIVAKIPPPEGDRDAPLKASLVDSWYDPYLGVVILVRVIDGVLTKGLNVRFMQGGTQHLIDRVGCFTPKRVDLPEIGPGEIGFITAQIKEVEQARVGDTITTVKNGAPEPLKGYKEVQPVVFCGLFPVDAADFEKLRESIGKLRLNDASFSYEMESSAALGFGFRAGFLGLLHLEIIQERLSREYDLDLITTAPSVVYTVHLAHTKTEDAKVIEIHNPADWPDVNRIDVIEEPWIKATIYTPDDYLGAILKLCQDRRGIQTNLTYVGGASTLRAQVTYDLPLNEVVFDFYDRLKSISRGYASFDYEQIGSREGDLVKMNILVNNEPVDALSLIVHRSVAEERGRGMCERLKDLIPRHLFKIPIQAAIGGKIIARETIAALRKDVTAKCYGGDISRKKKLLEKQKKGKARMREYGNVSIPQEAFIAALRMGEE</sequence>
<keyword id="KW-0997">Cell inner membrane</keyword>
<keyword id="KW-1003">Cell membrane</keyword>
<keyword id="KW-0342">GTP-binding</keyword>
<keyword id="KW-0378">Hydrolase</keyword>
<keyword id="KW-0472">Membrane</keyword>
<keyword id="KW-0547">Nucleotide-binding</keyword>
<keyword id="KW-0648">Protein biosynthesis</keyword>
<keyword id="KW-1185">Reference proteome</keyword>
<reference key="1">
    <citation type="journal article" date="2009" name="J. Bacteriol.">
        <title>Complete genome sequence of Erythrobacter litoralis HTCC2594.</title>
        <authorList>
            <person name="Oh H.M."/>
            <person name="Giovannoni S.J."/>
            <person name="Ferriera S."/>
            <person name="Johnson J."/>
            <person name="Cho J.C."/>
        </authorList>
    </citation>
    <scope>NUCLEOTIDE SEQUENCE [LARGE SCALE GENOMIC DNA]</scope>
    <source>
        <strain>HTCC2594</strain>
    </source>
</reference>
<gene>
    <name evidence="1" type="primary">lepA</name>
    <name type="ordered locus">ELI_07265</name>
</gene>
<feature type="chain" id="PRO_1000031995" description="Elongation factor 4">
    <location>
        <begin position="1"/>
        <end position="609"/>
    </location>
</feature>
<feature type="domain" description="tr-type G">
    <location>
        <begin position="5"/>
        <end position="187"/>
    </location>
</feature>
<feature type="binding site" evidence="1">
    <location>
        <begin position="17"/>
        <end position="22"/>
    </location>
    <ligand>
        <name>GTP</name>
        <dbReference type="ChEBI" id="CHEBI:37565"/>
    </ligand>
</feature>
<feature type="binding site" evidence="1">
    <location>
        <begin position="134"/>
        <end position="137"/>
    </location>
    <ligand>
        <name>GTP</name>
        <dbReference type="ChEBI" id="CHEBI:37565"/>
    </ligand>
</feature>
<proteinExistence type="inferred from homology"/>
<name>LEPA_ERYLH</name>
<dbReference type="EC" id="3.6.5.n1" evidence="1"/>
<dbReference type="EMBL" id="CP000157">
    <property type="protein sequence ID" value="ABC63545.1"/>
    <property type="molecule type" value="Genomic_DNA"/>
</dbReference>
<dbReference type="RefSeq" id="WP_011414379.1">
    <property type="nucleotide sequence ID" value="NC_007722.1"/>
</dbReference>
<dbReference type="SMR" id="Q2N9U6"/>
<dbReference type="STRING" id="314225.ELI_07265"/>
<dbReference type="KEGG" id="eli:ELI_07265"/>
<dbReference type="eggNOG" id="COG0481">
    <property type="taxonomic scope" value="Bacteria"/>
</dbReference>
<dbReference type="HOGENOM" id="CLU_009995_3_3_5"/>
<dbReference type="OrthoDB" id="9802948at2"/>
<dbReference type="Proteomes" id="UP000008808">
    <property type="component" value="Chromosome"/>
</dbReference>
<dbReference type="GO" id="GO:0005886">
    <property type="term" value="C:plasma membrane"/>
    <property type="evidence" value="ECO:0007669"/>
    <property type="project" value="UniProtKB-SubCell"/>
</dbReference>
<dbReference type="GO" id="GO:0005525">
    <property type="term" value="F:GTP binding"/>
    <property type="evidence" value="ECO:0007669"/>
    <property type="project" value="UniProtKB-UniRule"/>
</dbReference>
<dbReference type="GO" id="GO:0003924">
    <property type="term" value="F:GTPase activity"/>
    <property type="evidence" value="ECO:0007669"/>
    <property type="project" value="UniProtKB-UniRule"/>
</dbReference>
<dbReference type="GO" id="GO:0097216">
    <property type="term" value="F:guanosine tetraphosphate binding"/>
    <property type="evidence" value="ECO:0007669"/>
    <property type="project" value="UniProtKB-ARBA"/>
</dbReference>
<dbReference type="GO" id="GO:0043022">
    <property type="term" value="F:ribosome binding"/>
    <property type="evidence" value="ECO:0007669"/>
    <property type="project" value="UniProtKB-UniRule"/>
</dbReference>
<dbReference type="GO" id="GO:0003746">
    <property type="term" value="F:translation elongation factor activity"/>
    <property type="evidence" value="ECO:0007669"/>
    <property type="project" value="UniProtKB-UniRule"/>
</dbReference>
<dbReference type="GO" id="GO:0045727">
    <property type="term" value="P:positive regulation of translation"/>
    <property type="evidence" value="ECO:0007669"/>
    <property type="project" value="UniProtKB-UniRule"/>
</dbReference>
<dbReference type="CDD" id="cd03699">
    <property type="entry name" value="EF4_II"/>
    <property type="match status" value="1"/>
</dbReference>
<dbReference type="CDD" id="cd16260">
    <property type="entry name" value="EF4_III"/>
    <property type="match status" value="1"/>
</dbReference>
<dbReference type="CDD" id="cd01890">
    <property type="entry name" value="LepA"/>
    <property type="match status" value="1"/>
</dbReference>
<dbReference type="CDD" id="cd03709">
    <property type="entry name" value="lepA_C"/>
    <property type="match status" value="1"/>
</dbReference>
<dbReference type="FunFam" id="3.40.50.300:FF:000078">
    <property type="entry name" value="Elongation factor 4"/>
    <property type="match status" value="1"/>
</dbReference>
<dbReference type="FunFam" id="2.40.30.10:FF:000015">
    <property type="entry name" value="Translation factor GUF1, mitochondrial"/>
    <property type="match status" value="1"/>
</dbReference>
<dbReference type="FunFam" id="3.30.70.240:FF:000007">
    <property type="entry name" value="Translation factor GUF1, mitochondrial"/>
    <property type="match status" value="1"/>
</dbReference>
<dbReference type="FunFam" id="3.30.70.2570:FF:000001">
    <property type="entry name" value="Translation factor GUF1, mitochondrial"/>
    <property type="match status" value="1"/>
</dbReference>
<dbReference type="FunFam" id="3.30.70.870:FF:000004">
    <property type="entry name" value="Translation factor GUF1, mitochondrial"/>
    <property type="match status" value="1"/>
</dbReference>
<dbReference type="Gene3D" id="3.30.70.240">
    <property type="match status" value="1"/>
</dbReference>
<dbReference type="Gene3D" id="3.30.70.2570">
    <property type="entry name" value="Elongation factor 4, C-terminal domain"/>
    <property type="match status" value="1"/>
</dbReference>
<dbReference type="Gene3D" id="3.30.70.870">
    <property type="entry name" value="Elongation Factor G (Translational Gtpase), domain 3"/>
    <property type="match status" value="1"/>
</dbReference>
<dbReference type="Gene3D" id="3.40.50.300">
    <property type="entry name" value="P-loop containing nucleotide triphosphate hydrolases"/>
    <property type="match status" value="1"/>
</dbReference>
<dbReference type="Gene3D" id="2.40.30.10">
    <property type="entry name" value="Translation factors"/>
    <property type="match status" value="1"/>
</dbReference>
<dbReference type="HAMAP" id="MF_00071">
    <property type="entry name" value="LepA"/>
    <property type="match status" value="1"/>
</dbReference>
<dbReference type="InterPro" id="IPR006297">
    <property type="entry name" value="EF-4"/>
</dbReference>
<dbReference type="InterPro" id="IPR035647">
    <property type="entry name" value="EFG_III/V"/>
</dbReference>
<dbReference type="InterPro" id="IPR000640">
    <property type="entry name" value="EFG_V-like"/>
</dbReference>
<dbReference type="InterPro" id="IPR004161">
    <property type="entry name" value="EFTu-like_2"/>
</dbReference>
<dbReference type="InterPro" id="IPR031157">
    <property type="entry name" value="G_TR_CS"/>
</dbReference>
<dbReference type="InterPro" id="IPR038363">
    <property type="entry name" value="LepA_C_sf"/>
</dbReference>
<dbReference type="InterPro" id="IPR013842">
    <property type="entry name" value="LepA_CTD"/>
</dbReference>
<dbReference type="InterPro" id="IPR035654">
    <property type="entry name" value="LepA_IV"/>
</dbReference>
<dbReference type="InterPro" id="IPR027417">
    <property type="entry name" value="P-loop_NTPase"/>
</dbReference>
<dbReference type="InterPro" id="IPR005225">
    <property type="entry name" value="Small_GTP-bd"/>
</dbReference>
<dbReference type="InterPro" id="IPR000795">
    <property type="entry name" value="T_Tr_GTP-bd_dom"/>
</dbReference>
<dbReference type="NCBIfam" id="TIGR01393">
    <property type="entry name" value="lepA"/>
    <property type="match status" value="1"/>
</dbReference>
<dbReference type="NCBIfam" id="TIGR00231">
    <property type="entry name" value="small_GTP"/>
    <property type="match status" value="1"/>
</dbReference>
<dbReference type="PANTHER" id="PTHR43512:SF4">
    <property type="entry name" value="TRANSLATION FACTOR GUF1 HOMOLOG, CHLOROPLASTIC"/>
    <property type="match status" value="1"/>
</dbReference>
<dbReference type="PANTHER" id="PTHR43512">
    <property type="entry name" value="TRANSLATION FACTOR GUF1-RELATED"/>
    <property type="match status" value="1"/>
</dbReference>
<dbReference type="Pfam" id="PF00679">
    <property type="entry name" value="EFG_C"/>
    <property type="match status" value="1"/>
</dbReference>
<dbReference type="Pfam" id="PF00009">
    <property type="entry name" value="GTP_EFTU"/>
    <property type="match status" value="1"/>
</dbReference>
<dbReference type="Pfam" id="PF03144">
    <property type="entry name" value="GTP_EFTU_D2"/>
    <property type="match status" value="1"/>
</dbReference>
<dbReference type="Pfam" id="PF06421">
    <property type="entry name" value="LepA_C"/>
    <property type="match status" value="1"/>
</dbReference>
<dbReference type="PRINTS" id="PR00315">
    <property type="entry name" value="ELONGATNFCT"/>
</dbReference>
<dbReference type="SUPFAM" id="SSF54980">
    <property type="entry name" value="EF-G C-terminal domain-like"/>
    <property type="match status" value="2"/>
</dbReference>
<dbReference type="SUPFAM" id="SSF52540">
    <property type="entry name" value="P-loop containing nucleoside triphosphate hydrolases"/>
    <property type="match status" value="1"/>
</dbReference>
<dbReference type="PROSITE" id="PS00301">
    <property type="entry name" value="G_TR_1"/>
    <property type="match status" value="1"/>
</dbReference>
<dbReference type="PROSITE" id="PS51722">
    <property type="entry name" value="G_TR_2"/>
    <property type="match status" value="1"/>
</dbReference>